<evidence type="ECO:0000255" key="1"/>
<evidence type="ECO:0000255" key="2">
    <source>
        <dbReference type="PROSITE-ProRule" id="PRU00498"/>
    </source>
</evidence>
<evidence type="ECO:0000303" key="3">
    <source>
    </source>
</evidence>
<evidence type="ECO:0000305" key="4"/>
<evidence type="ECO:0000305" key="5">
    <source>
    </source>
</evidence>
<keyword id="KW-0325">Glycoprotein</keyword>
<keyword id="KW-0964">Secreted</keyword>
<keyword id="KW-0732">Signal</keyword>
<keyword id="KW-0843">Virulence</keyword>
<feature type="signal peptide" evidence="1">
    <location>
        <begin position="1"/>
        <end position="35"/>
    </location>
</feature>
<feature type="chain" id="PRO_5029498509" description="NLP effector protein 6">
    <location>
        <begin position="36"/>
        <end position="267"/>
    </location>
</feature>
<feature type="short sequence motif" description="Conserved undecapeptide motif" evidence="5">
    <location>
        <begin position="117"/>
        <end position="127"/>
    </location>
</feature>
<feature type="short sequence motif" description="Conserved heptapeptide motif" evidence="5">
    <location>
        <begin position="134"/>
        <end position="140"/>
    </location>
</feature>
<feature type="glycosylation site" description="N-linked (GlcNAc...) asparagine" evidence="2">
    <location>
        <position position="114"/>
    </location>
</feature>
<feature type="glycosylation site" description="N-linked (GlcNAc...) asparagine" evidence="2">
    <location>
        <position position="192"/>
    </location>
</feature>
<reference key="1">
    <citation type="journal article" date="2020" name="Front. Plant Sci.">
        <title>Identification and characterization of Nep1-like proteins from the grapevine downy mildew pathogen Plasmopara viticola.</title>
        <authorList>
            <person name="Schumacher S."/>
            <person name="Grosser K."/>
            <person name="Voegele R.T."/>
            <person name="Kassemeyer H.H."/>
            <person name="Fuchs R."/>
        </authorList>
    </citation>
    <scope>NUCLEOTIDE SEQUENCE [MRNA]</scope>
    <scope>IDENTIFICATION</scope>
    <scope>DOMAIN</scope>
    <source>
        <strain>Pv1446</strain>
    </source>
</reference>
<gene>
    <name evidence="3" type="primary">NLP6</name>
</gene>
<protein>
    <recommendedName>
        <fullName evidence="3">NLP effector protein 6</fullName>
    </recommendedName>
    <alternativeName>
        <fullName evidence="3">Nep1-like protein 6</fullName>
    </alternativeName>
</protein>
<comment type="function">
    <text evidence="5">Probable secreted effector that may act as a pathogen-associated molecular pattern (PAMP) recognized by the plant immune system.</text>
</comment>
<comment type="subcellular location">
    <subcellularLocation>
        <location evidence="5">Secreted</location>
    </subcellularLocation>
</comment>
<comment type="domain">
    <text evidence="5">The structure of NLP effectors is remarkably conserved with a high level of conservation of a central region containing the conserved undecapeptide motif AIMYAWYFPKD and heptapeptide motif GHRHDWE.</text>
</comment>
<comment type="similarity">
    <text evidence="4">Belongs to the Necrosis inducing protein (NPP1) family.</text>
</comment>
<accession>A0A7M2BU60</accession>
<name>NLP6_PLAVT</name>
<proteinExistence type="evidence at transcript level"/>
<sequence>MRTTSPYSHCSHVEMNAGAFVTMLLVALSVCVAAAVDPDVIQPFPQPKPTTIAQKAAVKYKPLLYTSMVVCVPYAAVDAAGRVTDGLKGRHGNDGCTYARHGSQVYGRVEPYGNLSAIMYAWYFPKRFWLGFPIQRHDWKSVVVWIDNLESKVSAIVAVSMAKSDTKYNTETELDANDFARLQVDNQIVISNTSLRFEFFEFGLRSSYLRLTGYNGQYQNLIMWDQLTDAAREALNDDNNFGSAVVPLSDKQFKAHVKEAYPSKSVR</sequence>
<organism>
    <name type="scientific">Plasmopara viticola</name>
    <name type="common">Downy mildew of grapevine</name>
    <name type="synonym">Botrytis viticola</name>
    <dbReference type="NCBI Taxonomy" id="143451"/>
    <lineage>
        <taxon>Eukaryota</taxon>
        <taxon>Sar</taxon>
        <taxon>Stramenopiles</taxon>
        <taxon>Oomycota</taxon>
        <taxon>Peronosporales</taxon>
        <taxon>Peronosporaceae</taxon>
        <taxon>Plasmopara</taxon>
    </lineage>
</organism>
<dbReference type="EMBL" id="MT722077">
    <property type="protein sequence ID" value="QOT13799.1"/>
    <property type="molecule type" value="mRNA"/>
</dbReference>
<dbReference type="SMR" id="A0A7M2BU60"/>
<dbReference type="GO" id="GO:0005576">
    <property type="term" value="C:extracellular region"/>
    <property type="evidence" value="ECO:0007669"/>
    <property type="project" value="UniProtKB-SubCell"/>
</dbReference>
<dbReference type="InterPro" id="IPR008701">
    <property type="entry name" value="NPP1"/>
</dbReference>
<dbReference type="PANTHER" id="PTHR33657">
    <property type="entry name" value="DOMAIN PROTEIN, PUTATIVE (AFU_ORTHOLOGUE AFUA_5G00600)-RELATED"/>
    <property type="match status" value="1"/>
</dbReference>
<dbReference type="PANTHER" id="PTHR33657:SF8">
    <property type="entry name" value="DOMAIN PROTEIN, PUTATIVE (AFU_ORTHOLOGUE AFUA_5G00600)-RELATED"/>
    <property type="match status" value="1"/>
</dbReference>
<dbReference type="Pfam" id="PF05630">
    <property type="entry name" value="NPP1"/>
    <property type="match status" value="1"/>
</dbReference>
<dbReference type="PIRSF" id="PIRSF029958">
    <property type="entry name" value="Necrosis-inducing_protein"/>
    <property type="match status" value="1"/>
</dbReference>